<protein>
    <recommendedName>
        <fullName evidence="1">Dihydroxy-acid dehydratase 2</fullName>
        <shortName evidence="1">DAD 2</shortName>
        <ecNumber evidence="1">4.2.1.9</ecNumber>
    </recommendedName>
</protein>
<reference key="1">
    <citation type="journal article" date="2003" name="Genome Res.">
        <title>Comparative complete genome sequence analysis of the amino acid replacements responsible for the thermostability of Corynebacterium efficiens.</title>
        <authorList>
            <person name="Nishio Y."/>
            <person name="Nakamura Y."/>
            <person name="Kawarabayasi Y."/>
            <person name="Usuda Y."/>
            <person name="Kimura E."/>
            <person name="Sugimoto S."/>
            <person name="Matsui K."/>
            <person name="Yamagishi A."/>
            <person name="Kikuchi H."/>
            <person name="Ikeo K."/>
            <person name="Gojobori T."/>
        </authorList>
    </citation>
    <scope>NUCLEOTIDE SEQUENCE [LARGE SCALE GENOMIC DNA]</scope>
    <source>
        <strain>DSM 44549 / YS-314 / AJ 12310 / JCM 11189 / NBRC 100395</strain>
    </source>
</reference>
<keyword id="KW-0001">2Fe-2S</keyword>
<keyword id="KW-0028">Amino-acid biosynthesis</keyword>
<keyword id="KW-0100">Branched-chain amino acid biosynthesis</keyword>
<keyword id="KW-0408">Iron</keyword>
<keyword id="KW-0411">Iron-sulfur</keyword>
<keyword id="KW-0456">Lyase</keyword>
<keyword id="KW-0460">Magnesium</keyword>
<keyword id="KW-0479">Metal-binding</keyword>
<keyword id="KW-1185">Reference proteome</keyword>
<name>ILVD2_COREF</name>
<accession>Q8FMR1</accession>
<dbReference type="EC" id="4.2.1.9" evidence="1"/>
<dbReference type="EMBL" id="BA000035">
    <property type="protein sequence ID" value="BAC19249.1"/>
    <property type="molecule type" value="Genomic_DNA"/>
</dbReference>
<dbReference type="RefSeq" id="WP_006768446.1">
    <property type="nucleotide sequence ID" value="NC_004369.1"/>
</dbReference>
<dbReference type="SMR" id="Q8FMR1"/>
<dbReference type="STRING" id="196164.gene:10742879"/>
<dbReference type="KEGG" id="cef:CE2439"/>
<dbReference type="eggNOG" id="COG0129">
    <property type="taxonomic scope" value="Bacteria"/>
</dbReference>
<dbReference type="HOGENOM" id="CLU_014271_4_2_11"/>
<dbReference type="OrthoDB" id="9807077at2"/>
<dbReference type="UniPathway" id="UPA00047">
    <property type="reaction ID" value="UER00057"/>
</dbReference>
<dbReference type="UniPathway" id="UPA00049">
    <property type="reaction ID" value="UER00061"/>
</dbReference>
<dbReference type="Proteomes" id="UP000001409">
    <property type="component" value="Chromosome"/>
</dbReference>
<dbReference type="GO" id="GO:0051537">
    <property type="term" value="F:2 iron, 2 sulfur cluster binding"/>
    <property type="evidence" value="ECO:0007669"/>
    <property type="project" value="UniProtKB-UniRule"/>
</dbReference>
<dbReference type="GO" id="GO:0004160">
    <property type="term" value="F:dihydroxy-acid dehydratase activity"/>
    <property type="evidence" value="ECO:0007669"/>
    <property type="project" value="UniProtKB-UniRule"/>
</dbReference>
<dbReference type="GO" id="GO:0000287">
    <property type="term" value="F:magnesium ion binding"/>
    <property type="evidence" value="ECO:0007669"/>
    <property type="project" value="UniProtKB-UniRule"/>
</dbReference>
<dbReference type="GO" id="GO:0009097">
    <property type="term" value="P:isoleucine biosynthetic process"/>
    <property type="evidence" value="ECO:0007669"/>
    <property type="project" value="UniProtKB-UniRule"/>
</dbReference>
<dbReference type="GO" id="GO:0009099">
    <property type="term" value="P:L-valine biosynthetic process"/>
    <property type="evidence" value="ECO:0007669"/>
    <property type="project" value="UniProtKB-UniRule"/>
</dbReference>
<dbReference type="FunFam" id="3.50.30.80:FF:000001">
    <property type="entry name" value="Dihydroxy-acid dehydratase"/>
    <property type="match status" value="1"/>
</dbReference>
<dbReference type="Gene3D" id="3.50.30.80">
    <property type="entry name" value="IlvD/EDD C-terminal domain-like"/>
    <property type="match status" value="1"/>
</dbReference>
<dbReference type="HAMAP" id="MF_00012">
    <property type="entry name" value="IlvD"/>
    <property type="match status" value="1"/>
</dbReference>
<dbReference type="InterPro" id="IPR050165">
    <property type="entry name" value="DHAD_IlvD/Edd"/>
</dbReference>
<dbReference type="InterPro" id="IPR042096">
    <property type="entry name" value="Dihydro-acid_dehy_C"/>
</dbReference>
<dbReference type="InterPro" id="IPR004404">
    <property type="entry name" value="DihydroxyA_deHydtase"/>
</dbReference>
<dbReference type="InterPro" id="IPR020558">
    <property type="entry name" value="DiOHA_6PGluconate_deHydtase_CS"/>
</dbReference>
<dbReference type="InterPro" id="IPR056740">
    <property type="entry name" value="ILV_EDD_C"/>
</dbReference>
<dbReference type="InterPro" id="IPR000581">
    <property type="entry name" value="ILV_EDD_N"/>
</dbReference>
<dbReference type="InterPro" id="IPR037237">
    <property type="entry name" value="IlvD/EDD_N"/>
</dbReference>
<dbReference type="NCBIfam" id="TIGR00110">
    <property type="entry name" value="ilvD"/>
    <property type="match status" value="1"/>
</dbReference>
<dbReference type="NCBIfam" id="NF002068">
    <property type="entry name" value="PRK00911.1"/>
    <property type="match status" value="1"/>
</dbReference>
<dbReference type="PANTHER" id="PTHR21000">
    <property type="entry name" value="DIHYDROXY-ACID DEHYDRATASE DAD"/>
    <property type="match status" value="1"/>
</dbReference>
<dbReference type="PANTHER" id="PTHR21000:SF5">
    <property type="entry name" value="DIHYDROXY-ACID DEHYDRATASE, MITOCHONDRIAL"/>
    <property type="match status" value="1"/>
</dbReference>
<dbReference type="Pfam" id="PF24877">
    <property type="entry name" value="ILV_EDD_C"/>
    <property type="match status" value="1"/>
</dbReference>
<dbReference type="Pfam" id="PF00920">
    <property type="entry name" value="ILVD_EDD_N"/>
    <property type="match status" value="1"/>
</dbReference>
<dbReference type="SUPFAM" id="SSF143975">
    <property type="entry name" value="IlvD/EDD N-terminal domain-like"/>
    <property type="match status" value="1"/>
</dbReference>
<dbReference type="SUPFAM" id="SSF52016">
    <property type="entry name" value="LeuD/IlvD-like"/>
    <property type="match status" value="1"/>
</dbReference>
<dbReference type="PROSITE" id="PS00886">
    <property type="entry name" value="ILVD_EDD_1"/>
    <property type="match status" value="1"/>
</dbReference>
<dbReference type="PROSITE" id="PS00887">
    <property type="entry name" value="ILVD_EDD_2"/>
    <property type="match status" value="1"/>
</dbReference>
<evidence type="ECO:0000255" key="1">
    <source>
        <dbReference type="HAMAP-Rule" id="MF_00012"/>
    </source>
</evidence>
<gene>
    <name evidence="1" type="primary">ilvD2</name>
    <name type="ordered locus">CE2439</name>
</gene>
<sequence>MTNDHDIDIKPRSRDVTDGLERTAARGMLRAVGMGDDDWEKPQIGVASSWNEITPCNLTLKKLAGFAKEGVHEAGGYPLEFGTISVSDGISMGHEGMHYSLVSREVITDSVETVMSAERLDGSVLLAGCDKSIPGMLMAAARLNLSSVFLYNGSTMPGTAKMSDGTEREVTLIDAFEAVGACRAGTMSREDVDAIERSVCPGEGACGGMYTANTMASAAEAMGMSLPGSAAPPAIHQDRTLYARRSGEAVVELLRRGIRARDIITRESLLNAVAVVMALGGSTNAVLHLMAIAHEAEVDLTLEDFNAVGDKVPHLGDLKPFGRYVMNDVFKIGGIPVVMKALLDAGLINGDCLTITGRTVAENLQGINPPDPDGQILRAIDNPIHKTGGLTILHGSLAPGGAVVKTAGFDTERFEGTARVFNQEAPAMDAVLNGELKAGDVVIIRYEGPKGGPGMREMLAITGAIKGAGIGKEVLLITDGRFSGGSTGLCIGHVAPEAVDGGPIALVEDGDPILVDISQRRIDLLVDESILEERRKTLQHPENPRLHGVLGKYAKLVQSASMGAVCF</sequence>
<proteinExistence type="inferred from homology"/>
<comment type="function">
    <text evidence="1">Functions in the biosynthesis of branched-chain amino acids. Catalyzes the dehydration of (2R,3R)-2,3-dihydroxy-3-methylpentanoate (2,3-dihydroxy-3-methylvalerate) into 2-oxo-3-methylpentanoate (2-oxo-3-methylvalerate) and of (2R)-2,3-dihydroxy-3-methylbutanoate (2,3-dihydroxyisovalerate) into 2-oxo-3-methylbutanoate (2-oxoisovalerate), the penultimate precursor to L-isoleucine and L-valine, respectively.</text>
</comment>
<comment type="catalytic activity">
    <reaction evidence="1">
        <text>(2R)-2,3-dihydroxy-3-methylbutanoate = 3-methyl-2-oxobutanoate + H2O</text>
        <dbReference type="Rhea" id="RHEA:24809"/>
        <dbReference type="ChEBI" id="CHEBI:11851"/>
        <dbReference type="ChEBI" id="CHEBI:15377"/>
        <dbReference type="ChEBI" id="CHEBI:49072"/>
        <dbReference type="EC" id="4.2.1.9"/>
    </reaction>
    <physiologicalReaction direction="left-to-right" evidence="1">
        <dbReference type="Rhea" id="RHEA:24810"/>
    </physiologicalReaction>
</comment>
<comment type="catalytic activity">
    <reaction evidence="1">
        <text>(2R,3R)-2,3-dihydroxy-3-methylpentanoate = (S)-3-methyl-2-oxopentanoate + H2O</text>
        <dbReference type="Rhea" id="RHEA:27694"/>
        <dbReference type="ChEBI" id="CHEBI:15377"/>
        <dbReference type="ChEBI" id="CHEBI:35146"/>
        <dbReference type="ChEBI" id="CHEBI:49258"/>
        <dbReference type="EC" id="4.2.1.9"/>
    </reaction>
    <physiologicalReaction direction="left-to-right" evidence="1">
        <dbReference type="Rhea" id="RHEA:27695"/>
    </physiologicalReaction>
</comment>
<comment type="cofactor">
    <cofactor evidence="1">
        <name>[2Fe-2S] cluster</name>
        <dbReference type="ChEBI" id="CHEBI:190135"/>
    </cofactor>
    <text evidence="1">Binds 1 [2Fe-2S] cluster per subunit. This cluster acts as a Lewis acid cofactor.</text>
</comment>
<comment type="cofactor">
    <cofactor evidence="1">
        <name>Mg(2+)</name>
        <dbReference type="ChEBI" id="CHEBI:18420"/>
    </cofactor>
</comment>
<comment type="pathway">
    <text evidence="1">Amino-acid biosynthesis; L-isoleucine biosynthesis; L-isoleucine from 2-oxobutanoate: step 3/4.</text>
</comment>
<comment type="pathway">
    <text evidence="1">Amino-acid biosynthesis; L-valine biosynthesis; L-valine from pyruvate: step 3/4.</text>
</comment>
<comment type="subunit">
    <text evidence="1">Homodimer.</text>
</comment>
<comment type="similarity">
    <text evidence="1">Belongs to the IlvD/Edd family.</text>
</comment>
<organism>
    <name type="scientific">Corynebacterium efficiens (strain DSM 44549 / YS-314 / AJ 12310 / JCM 11189 / NBRC 100395)</name>
    <dbReference type="NCBI Taxonomy" id="196164"/>
    <lineage>
        <taxon>Bacteria</taxon>
        <taxon>Bacillati</taxon>
        <taxon>Actinomycetota</taxon>
        <taxon>Actinomycetes</taxon>
        <taxon>Mycobacteriales</taxon>
        <taxon>Corynebacteriaceae</taxon>
        <taxon>Corynebacterium</taxon>
    </lineage>
</organism>
<feature type="chain" id="PRO_0000103462" description="Dihydroxy-acid dehydratase 2">
    <location>
        <begin position="1"/>
        <end position="567"/>
    </location>
</feature>
<feature type="active site" description="Proton acceptor" evidence="1">
    <location>
        <position position="483"/>
    </location>
</feature>
<feature type="binding site" evidence="1">
    <location>
        <position position="56"/>
    </location>
    <ligand>
        <name>[2Fe-2S] cluster</name>
        <dbReference type="ChEBI" id="CHEBI:190135"/>
    </ligand>
</feature>
<feature type="binding site" evidence="1">
    <location>
        <position position="88"/>
    </location>
    <ligand>
        <name>Mg(2+)</name>
        <dbReference type="ChEBI" id="CHEBI:18420"/>
    </ligand>
</feature>
<feature type="binding site" evidence="1">
    <location>
        <position position="129"/>
    </location>
    <ligand>
        <name>[2Fe-2S] cluster</name>
        <dbReference type="ChEBI" id="CHEBI:190135"/>
    </ligand>
</feature>
<feature type="binding site" evidence="1">
    <location>
        <position position="130"/>
    </location>
    <ligand>
        <name>Mg(2+)</name>
        <dbReference type="ChEBI" id="CHEBI:18420"/>
    </ligand>
</feature>
<feature type="binding site" description="via carbamate group" evidence="1">
    <location>
        <position position="131"/>
    </location>
    <ligand>
        <name>Mg(2+)</name>
        <dbReference type="ChEBI" id="CHEBI:18420"/>
    </ligand>
</feature>
<feature type="binding site" evidence="1">
    <location>
        <position position="206"/>
    </location>
    <ligand>
        <name>[2Fe-2S] cluster</name>
        <dbReference type="ChEBI" id="CHEBI:190135"/>
    </ligand>
</feature>
<feature type="binding site" evidence="1">
    <location>
        <position position="457"/>
    </location>
    <ligand>
        <name>Mg(2+)</name>
        <dbReference type="ChEBI" id="CHEBI:18420"/>
    </ligand>
</feature>
<feature type="modified residue" description="N6-carboxylysine" evidence="1">
    <location>
        <position position="131"/>
    </location>
</feature>